<comment type="function">
    <text evidence="1">Component of the MMS22L-TONSL complex, a complex that promotes homologous recombination-mediated repair of double-strand breaks (DSBs) at stalled or collapsed replication forks. The MMS22L-TONSL complex is required to maintain genome integrity during DNA replication. It mediates the assembly of RAD51 filaments on single-stranded DNA (ssDNA): the MMS22L-TONSL complex is recruited to DSBs following histone replacement by histone chaperones and eviction of the replication protein A complex (RPA/RP-A) from DSBs. Following recruitment to DSBs, the TONSL-MMS22L complex promotes recruitment of RAD51 filaments and subsequent homologous recombination. Within the complex, MMS22L acts by binding ssDNA.</text>
</comment>
<comment type="subunit">
    <text evidence="1">Component of the MMS22L-TONSL complex, a complex at least composed of MMS22L and TONSL/NFKBIL2. Interacts with RAD51; interaction is direct.</text>
</comment>
<comment type="subcellular location">
    <subcellularLocation>
        <location evidence="1">Nucleus</location>
    </subcellularLocation>
    <subcellularLocation>
        <location evidence="1">Chromosome</location>
    </subcellularLocation>
    <text evidence="1">Localizes to DNA damage sites, accumulates at stressed replication forks. Recruited to stalled or collapsed replication forks; directly binds replication protein A complex (RPA/RP-A)-coated single-stranded DNA (ssDNA).</text>
</comment>
<comment type="PTM">
    <text evidence="1">Degraded by the ubiquitin-proteasome system upon replication stress.</text>
</comment>
<comment type="similarity">
    <text evidence="2">Belongs to the MMS22 family. MMS22L subfamily.</text>
</comment>
<dbReference type="EMBL" id="AAFC03054673">
    <property type="status" value="NOT_ANNOTATED_CDS"/>
    <property type="molecule type" value="Genomic_DNA"/>
</dbReference>
<dbReference type="EMBL" id="AAFC03056615">
    <property type="status" value="NOT_ANNOTATED_CDS"/>
    <property type="molecule type" value="Genomic_DNA"/>
</dbReference>
<dbReference type="FunCoup" id="E1BGH8">
    <property type="interactions" value="1898"/>
</dbReference>
<dbReference type="STRING" id="9913.ENSBTAP00000000830"/>
<dbReference type="CarbonylDB" id="E1BGH8"/>
<dbReference type="PaxDb" id="9913-ENSBTAP00000000830"/>
<dbReference type="eggNOG" id="ENOG502QQCR">
    <property type="taxonomic scope" value="Eukaryota"/>
</dbReference>
<dbReference type="HOGENOM" id="CLU_007143_0_0_1"/>
<dbReference type="InParanoid" id="E1BGH8"/>
<dbReference type="OrthoDB" id="8193282at2759"/>
<dbReference type="TreeFam" id="TF353832"/>
<dbReference type="Proteomes" id="UP000009136">
    <property type="component" value="Unplaced"/>
</dbReference>
<dbReference type="GO" id="GO:0043596">
    <property type="term" value="C:nuclear replication fork"/>
    <property type="evidence" value="ECO:0000250"/>
    <property type="project" value="UniProtKB"/>
</dbReference>
<dbReference type="GO" id="GO:0090734">
    <property type="term" value="C:site of DNA damage"/>
    <property type="evidence" value="ECO:0000250"/>
    <property type="project" value="UniProtKB"/>
</dbReference>
<dbReference type="GO" id="GO:0003697">
    <property type="term" value="F:single-stranded DNA binding"/>
    <property type="evidence" value="ECO:0000250"/>
    <property type="project" value="UniProtKB"/>
</dbReference>
<dbReference type="GO" id="GO:0006325">
    <property type="term" value="P:chromatin organization"/>
    <property type="evidence" value="ECO:0007669"/>
    <property type="project" value="UniProtKB-KW"/>
</dbReference>
<dbReference type="GO" id="GO:0000724">
    <property type="term" value="P:double-strand break repair via homologous recombination"/>
    <property type="evidence" value="ECO:0000250"/>
    <property type="project" value="UniProtKB"/>
</dbReference>
<dbReference type="GO" id="GO:0031297">
    <property type="term" value="P:replication fork processing"/>
    <property type="evidence" value="ECO:0000250"/>
    <property type="project" value="UniProtKB"/>
</dbReference>
<dbReference type="InterPro" id="IPR042320">
    <property type="entry name" value="MMS22-like"/>
</dbReference>
<dbReference type="InterPro" id="IPR029424">
    <property type="entry name" value="MMS22L_C"/>
</dbReference>
<dbReference type="InterPro" id="IPR029425">
    <property type="entry name" value="MMS22L_N"/>
</dbReference>
<dbReference type="PANTHER" id="PTHR28547">
    <property type="entry name" value="PROTEIN MMS22-LIKE"/>
    <property type="match status" value="1"/>
</dbReference>
<dbReference type="PANTHER" id="PTHR28547:SF1">
    <property type="entry name" value="PROTEIN MMS22-LIKE"/>
    <property type="match status" value="1"/>
</dbReference>
<dbReference type="Pfam" id="PF14911">
    <property type="entry name" value="MMS22L_C"/>
    <property type="match status" value="1"/>
</dbReference>
<dbReference type="Pfam" id="PF14910">
    <property type="entry name" value="MMS22L_N"/>
    <property type="match status" value="1"/>
</dbReference>
<evidence type="ECO:0000250" key="1">
    <source>
        <dbReference type="UniProtKB" id="Q6ZRQ5"/>
    </source>
</evidence>
<evidence type="ECO:0000305" key="2"/>
<accession>E1BGH8</accession>
<feature type="chain" id="PRO_0000403771" description="Protein MMS22-like">
    <location>
        <begin position="1"/>
        <end position="1244"/>
    </location>
</feature>
<sequence>MDNCPPASTFLTDSLELELQTEWCNPPCFSCDFDNRGGGKHFSGESYLSSGALKRVILNLDPLPTNFEEDTVEIFGIEWVTETALVNSSRVLFHLFRQQLYNLETLLQASCDFGKISTLHCKAHNIRQLCVTFLHYVKVFIFRSLQVRNAESHVPVHPYETLEAQLPSVLVDELHGLLLYIGHLSELPTTNTGAFVNQNQTKLYPPSWHLLHLHLDIHWLVLEILHMLGEKLKQVVYSHQFMNLAGDNLTNVSLFEEHCENLLCDLINLSLNRYDKKVRPSEALMSHHCPCPCIKELWVLLIHLLNHRSKWSLSESFWNWLNKLLKTLLEKSNDQRRSVLIVQPRDPLGFSWWIITHVASFYQFDRHGTPDEMRQMESNWNFVEELLKKSISVQDGILEEQLRMYLHCCLTLCDFWEPNIAIVTILWEYYSKNLNSSFSISWLPLKGLTYIIKSPLSMLEMVKTCCCDKQDHDLYKSSSSYTIFLCILAKVVKKAMKNNGPHPWKQVKGRIYSKFHQKRMEELTEVGLQNFFSLFLLLAAVAEVEDVASHVLRLLDFLKPTFKTSPLIWKGQMAFLLMYTQKNLDIGVLAEKFSNAFREKAKEFLVSKNDEMGQRQTLWTLLSIYMDSVQEVFETSRCLHPSHEKLLNDGFSMLLRACQESELRTVLNFLQAVLARIRSLHQQLRQELQREHGDLSVQSSLSTKERHLAAVASALWRHFFSFLKSQRMSQIVPLSQLADAAADFTLLAMDLPSTAPSDLQPQPVTSMIQLFGWDDIIWPQVVARYLSHFLQNSMLCEALSHSGCVSFQALTVRSWIRCILQMYVKNLHVPDDSFIDINPEQAVEKDYMEQLTELTRLLFKLSEVKNIFSKSQVELPIPDDPKKALIRFFEAVGITYGNLQTVSDKSAMVTKSLEYLGEILKYIKPYLGKKVSSAGLQLTYTMMGTLVKSWALIFATSKAQKLLFRIIDCLLLPHTVLQQEKELPAPMLTAIQKSLPLYLQGMCIVCCQSQNTNAYLNQLLGNVIEQYIGRFLPASAHVLGLGQHPVLLALKNSASVPPMSLLKKCIVHVIRKSYFEFKGSLLPPRLASILAFILQLVKETNTDVSEIELLLPGVLKCLLLVSEPQVKRLATENLQCMVRACQVGSGGEPAAQLTSVFRQFIEDYGMRYDYQIYSILEAVAALDQQVVIHLVPTLTQSLKNSERKWGLGRNSAQREAYSKLLSQLGQVGQDEIQRLENDHIESML</sequence>
<gene>
    <name type="primary">MMS22L</name>
</gene>
<protein>
    <recommendedName>
        <fullName>Protein MMS22-like</fullName>
    </recommendedName>
    <alternativeName>
        <fullName>Methyl methanesulfonate-sensitivity protein 22-like</fullName>
    </alternativeName>
</protein>
<proteinExistence type="inferred from homology"/>
<reference key="1">
    <citation type="journal article" date="2009" name="Science">
        <title>The genome sequence of taurine cattle: a window to ruminant biology and evolution.</title>
        <authorList>
            <consortium name="The bovine genome sequencing and analysis consortium"/>
        </authorList>
    </citation>
    <scope>NUCLEOTIDE SEQUENCE [LARGE SCALE GENOMIC DNA]</scope>
</reference>
<organism>
    <name type="scientific">Bos taurus</name>
    <name type="common">Bovine</name>
    <dbReference type="NCBI Taxonomy" id="9913"/>
    <lineage>
        <taxon>Eukaryota</taxon>
        <taxon>Metazoa</taxon>
        <taxon>Chordata</taxon>
        <taxon>Craniata</taxon>
        <taxon>Vertebrata</taxon>
        <taxon>Euteleostomi</taxon>
        <taxon>Mammalia</taxon>
        <taxon>Eutheria</taxon>
        <taxon>Laurasiatheria</taxon>
        <taxon>Artiodactyla</taxon>
        <taxon>Ruminantia</taxon>
        <taxon>Pecora</taxon>
        <taxon>Bovidae</taxon>
        <taxon>Bovinae</taxon>
        <taxon>Bos</taxon>
    </lineage>
</organism>
<name>MMS22_BOVIN</name>
<keyword id="KW-0156">Chromatin regulator</keyword>
<keyword id="KW-0158">Chromosome</keyword>
<keyword id="KW-0227">DNA damage</keyword>
<keyword id="KW-0234">DNA repair</keyword>
<keyword id="KW-0238">DNA-binding</keyword>
<keyword id="KW-0539">Nucleus</keyword>
<keyword id="KW-1185">Reference proteome</keyword>